<reference key="1">
    <citation type="submission" date="1999-11" db="EMBL/GenBank/DDBJ databases">
        <title>GM88, a 88-kDa Golgi protein homologous to GM130.</title>
        <authorList>
            <person name="Loh E."/>
            <person name="Thuan D.B."/>
            <person name="Hong W."/>
        </authorList>
    </citation>
    <scope>NUCLEOTIDE SEQUENCE [MRNA] (ISOFORM 1)</scope>
    <scope>VARIANTS ASN-480; ASN-530 AND GLN-541</scope>
</reference>
<reference key="2">
    <citation type="journal article" date="1998" name="DNA Res.">
        <title>Prediction of the coding sequences of unidentified human genes. XII. The complete sequences of 100 new cDNA clones from brain which code for large proteins in vitro.</title>
        <authorList>
            <person name="Nagase T."/>
            <person name="Ishikawa K."/>
            <person name="Suyama M."/>
            <person name="Kikuno R."/>
            <person name="Hirosawa M."/>
            <person name="Miyajima N."/>
            <person name="Tanaka A."/>
            <person name="Kotani H."/>
            <person name="Nomura N."/>
            <person name="Ohara O."/>
        </authorList>
    </citation>
    <scope>NUCLEOTIDE SEQUENCE [LARGE SCALE MRNA] (ISOFORM 1)</scope>
    <scope>VARIANTS ASN-480; ASN-530 AND GLN-541</scope>
    <source>
        <tissue>Brain</tissue>
    </source>
</reference>
<reference key="3">
    <citation type="journal article" date="2006" name="Nature">
        <title>Analysis of the DNA sequence and duplication history of human chromosome 15.</title>
        <authorList>
            <person name="Zody M.C."/>
            <person name="Garber M."/>
            <person name="Sharpe T."/>
            <person name="Young S.K."/>
            <person name="Rowen L."/>
            <person name="O'Neill K."/>
            <person name="Whittaker C.A."/>
            <person name="Kamal M."/>
            <person name="Chang J.L."/>
            <person name="Cuomo C.A."/>
            <person name="Dewar K."/>
            <person name="FitzGerald M.G."/>
            <person name="Kodira C.D."/>
            <person name="Madan A."/>
            <person name="Qin S."/>
            <person name="Yang X."/>
            <person name="Abbasi N."/>
            <person name="Abouelleil A."/>
            <person name="Arachchi H.M."/>
            <person name="Baradarani L."/>
            <person name="Birditt B."/>
            <person name="Bloom S."/>
            <person name="Bloom T."/>
            <person name="Borowsky M.L."/>
            <person name="Burke J."/>
            <person name="Butler J."/>
            <person name="Cook A."/>
            <person name="DeArellano K."/>
            <person name="DeCaprio D."/>
            <person name="Dorris L. III"/>
            <person name="Dors M."/>
            <person name="Eichler E.E."/>
            <person name="Engels R."/>
            <person name="Fahey J."/>
            <person name="Fleetwood P."/>
            <person name="Friedman C."/>
            <person name="Gearin G."/>
            <person name="Hall J.L."/>
            <person name="Hensley G."/>
            <person name="Johnson E."/>
            <person name="Jones C."/>
            <person name="Kamat A."/>
            <person name="Kaur A."/>
            <person name="Locke D.P."/>
            <person name="Madan A."/>
            <person name="Munson G."/>
            <person name="Jaffe D.B."/>
            <person name="Lui A."/>
            <person name="Macdonald P."/>
            <person name="Mauceli E."/>
            <person name="Naylor J.W."/>
            <person name="Nesbitt R."/>
            <person name="Nicol R."/>
            <person name="O'Leary S.B."/>
            <person name="Ratcliffe A."/>
            <person name="Rounsley S."/>
            <person name="She X."/>
            <person name="Sneddon K.M.B."/>
            <person name="Stewart S."/>
            <person name="Sougnez C."/>
            <person name="Stone S.M."/>
            <person name="Topham K."/>
            <person name="Vincent D."/>
            <person name="Wang S."/>
            <person name="Zimmer A.R."/>
            <person name="Birren B.W."/>
            <person name="Hood L."/>
            <person name="Lander E.S."/>
            <person name="Nusbaum C."/>
        </authorList>
    </citation>
    <scope>NUCLEOTIDE SEQUENCE [LARGE SCALE GENOMIC DNA]</scope>
</reference>
<reference key="4">
    <citation type="journal article" date="2004" name="Genome Res.">
        <title>The status, quality, and expansion of the NIH full-length cDNA project: the Mammalian Gene Collection (MGC).</title>
        <authorList>
            <consortium name="The MGC Project Team"/>
        </authorList>
    </citation>
    <scope>NUCLEOTIDE SEQUENCE [LARGE SCALE MRNA] (ISOFORMS 1 AND 2)</scope>
    <scope>VARIANTS ASN-480; ASN-530 AND GLN-541</scope>
    <source>
        <tissue>Brain</tissue>
    </source>
</reference>
<reference key="5">
    <citation type="journal article" date="2007" name="BMC Genomics">
        <title>The full-ORF clone resource of the German cDNA consortium.</title>
        <authorList>
            <person name="Bechtel S."/>
            <person name="Rosenfelder H."/>
            <person name="Duda A."/>
            <person name="Schmidt C.P."/>
            <person name="Ernst U."/>
            <person name="Wellenreuther R."/>
            <person name="Mehrle A."/>
            <person name="Schuster C."/>
            <person name="Bahr A."/>
            <person name="Bloecker H."/>
            <person name="Heubner D."/>
            <person name="Hoerlein A."/>
            <person name="Michel G."/>
            <person name="Wedler H."/>
            <person name="Koehrer K."/>
            <person name="Ottenwaelder B."/>
            <person name="Poustka A."/>
            <person name="Wiemann S."/>
            <person name="Schupp I."/>
        </authorList>
    </citation>
    <scope>NUCLEOTIDE SEQUENCE [LARGE SCALE MRNA] OF 27-631 (ISOFORM 1)</scope>
    <scope>VARIANTS ASN-480; ASN-530 AND GLN-541</scope>
    <source>
        <tissue>Liver</tissue>
    </source>
</reference>
<comment type="function">
    <text evidence="1">May be involved in maintaining Golgi structure.</text>
</comment>
<comment type="subcellular location">
    <subcellularLocation>
        <location evidence="1">Golgi apparatus</location>
        <location evidence="1">Golgi stack membrane</location>
        <topology evidence="1">Peripheral membrane protein</topology>
    </subcellularLocation>
</comment>
<comment type="alternative products">
    <event type="alternative splicing"/>
    <isoform>
        <id>A7E2F4-1</id>
        <name>1</name>
        <sequence type="displayed"/>
    </isoform>
    <isoform>
        <id>A7E2F4-3</id>
        <name>2</name>
        <sequence type="described" ref="VSP_040753"/>
    </isoform>
</comment>
<comment type="similarity">
    <text evidence="9">Belongs to the GOLGA8 family.</text>
</comment>
<comment type="caution">
    <text evidence="9">A family of highly similar proteins (GOLGA8A, GOLGA8B, GOLGA8C, GOLGA8D, GOLGA8E, GOLGA8F, GOLGA8G) are encoded by a repeated region on chromosome 15q11-15q13. Our sequences are in agreement with HGNC nomenclature.</text>
</comment>
<comment type="sequence caution" evidence="9">
    <conflict type="erroneous initiation">
        <sequence resource="EMBL-CDS" id="AAI44610"/>
    </conflict>
    <text>Truncated N-terminus.</text>
</comment>
<comment type="sequence caution" evidence="9">
    <conflict type="erroneous initiation">
        <sequence resource="EMBL-CDS" id="AAI50330"/>
    </conflict>
    <text>Extended N-terminus.</text>
</comment>
<comment type="sequence caution" evidence="9">
    <conflict type="erroneous initiation">
        <sequence resource="EMBL-CDS" id="AAI52411"/>
    </conflict>
    <text>Extended N-terminus.</text>
</comment>
<comment type="sequence caution" evidence="9">
    <conflict type="erroneous initiation">
        <sequence resource="EMBL-CDS" id="BAA74878"/>
    </conflict>
    <text>Extended N-terminus.</text>
</comment>
<comment type="sequence caution" evidence="9">
    <conflict type="miscellaneous discrepancy">
        <sequence resource="EMBL-CDS" id="CAH18214"/>
    </conflict>
    <text>Probable cloning artifact.</text>
</comment>
<dbReference type="EMBL" id="AF204231">
    <property type="protein sequence ID" value="AAF28463.1"/>
    <property type="molecule type" value="mRNA"/>
</dbReference>
<dbReference type="EMBL" id="AB020662">
    <property type="protein sequence ID" value="BAA74878.1"/>
    <property type="status" value="ALT_INIT"/>
    <property type="molecule type" value="mRNA"/>
</dbReference>
<dbReference type="EMBL" id="AC025678">
    <property type="status" value="NOT_ANNOTATED_CDS"/>
    <property type="molecule type" value="Genomic_DNA"/>
</dbReference>
<dbReference type="EMBL" id="BC093673">
    <property type="protein sequence ID" value="AAH93673.1"/>
    <property type="molecule type" value="mRNA"/>
</dbReference>
<dbReference type="EMBL" id="BC144609">
    <property type="protein sequence ID" value="AAI44610.1"/>
    <property type="status" value="ALT_INIT"/>
    <property type="molecule type" value="mRNA"/>
</dbReference>
<dbReference type="EMBL" id="BC150329">
    <property type="protein sequence ID" value="AAI50330.1"/>
    <property type="status" value="ALT_INIT"/>
    <property type="molecule type" value="mRNA"/>
</dbReference>
<dbReference type="EMBL" id="BC152410">
    <property type="protein sequence ID" value="AAI52411.1"/>
    <property type="status" value="ALT_INIT"/>
    <property type="molecule type" value="mRNA"/>
</dbReference>
<dbReference type="EMBL" id="CR749361">
    <property type="protein sequence ID" value="CAH18214.1"/>
    <property type="status" value="ALT_SEQ"/>
    <property type="molecule type" value="mRNA"/>
</dbReference>
<dbReference type="CCDS" id="CCDS10038.1">
    <molecule id="A7E2F4-3"/>
</dbReference>
<dbReference type="RefSeq" id="NP_001373822.1">
    <molecule id="A7E2F4-3"/>
    <property type="nucleotide sequence ID" value="NM_001386893.1"/>
</dbReference>
<dbReference type="RefSeq" id="NP_001373824.1">
    <molecule id="A7E2F4-3"/>
    <property type="nucleotide sequence ID" value="NM_001386895.1"/>
</dbReference>
<dbReference type="RefSeq" id="NP_851422.1">
    <molecule id="A7E2F4-3"/>
    <property type="nucleotide sequence ID" value="NM_181077.5"/>
</dbReference>
<dbReference type="SMR" id="A7E2F4"/>
<dbReference type="BioGRID" id="116657">
    <property type="interactions" value="42"/>
</dbReference>
<dbReference type="FunCoup" id="A7E2F4">
    <property type="interactions" value="192"/>
</dbReference>
<dbReference type="IntAct" id="A7E2F4">
    <property type="interactions" value="30"/>
</dbReference>
<dbReference type="MINT" id="A7E2F4"/>
<dbReference type="STRING" id="9606.ENSP00000352111"/>
<dbReference type="GlyConnect" id="1282">
    <property type="glycosylation" value="3 N-Linked glycans (1 site)"/>
</dbReference>
<dbReference type="GlyCosmos" id="A7E2F4">
    <property type="glycosylation" value="1 site, 3 glycans"/>
</dbReference>
<dbReference type="GlyGen" id="A7E2F4">
    <property type="glycosylation" value="1 site, 3 N-linked glycans (1 site)"/>
</dbReference>
<dbReference type="iPTMnet" id="A7E2F4"/>
<dbReference type="PhosphoSitePlus" id="A7E2F4"/>
<dbReference type="BioMuta" id="GOLGA8A"/>
<dbReference type="jPOST" id="A7E2F4"/>
<dbReference type="MassIVE" id="A7E2F4"/>
<dbReference type="PaxDb" id="9606-ENSP00000352111"/>
<dbReference type="PeptideAtlas" id="A7E2F4"/>
<dbReference type="ProteomicsDB" id="1791">
    <molecule id="A7E2F4-1"/>
</dbReference>
<dbReference type="Antibodypedia" id="67268">
    <property type="antibodies" value="49 antibodies from 12 providers"/>
</dbReference>
<dbReference type="DNASU" id="23015"/>
<dbReference type="Ensembl" id="ENST00000359187.5">
    <molecule id="A7E2F4-3"/>
    <property type="protein sequence ID" value="ENSP00000352111.4"/>
    <property type="gene ID" value="ENSG00000175265.19"/>
</dbReference>
<dbReference type="GeneID" id="23015"/>
<dbReference type="KEGG" id="hsa:23015"/>
<dbReference type="MANE-Select" id="ENST00000359187.5">
    <molecule id="A7E2F4-3"/>
    <property type="protein sequence ID" value="ENSP00000352111.4"/>
    <property type="RefSeq nucleotide sequence ID" value="NM_181077.5"/>
    <property type="RefSeq protein sequence ID" value="NP_851422.1"/>
</dbReference>
<dbReference type="UCSC" id="uc001zii.4">
    <molecule id="A7E2F4-1"/>
    <property type="organism name" value="human"/>
</dbReference>
<dbReference type="AGR" id="HGNC:31972"/>
<dbReference type="CTD" id="23015"/>
<dbReference type="DisGeNET" id="23015"/>
<dbReference type="GeneCards" id="GOLGA8A"/>
<dbReference type="HGNC" id="HGNC:31972">
    <property type="gene designation" value="GOLGA8A"/>
</dbReference>
<dbReference type="HPA" id="ENSG00000175265">
    <property type="expression patterns" value="Low tissue specificity"/>
</dbReference>
<dbReference type="MIM" id="616180">
    <property type="type" value="gene"/>
</dbReference>
<dbReference type="neXtProt" id="NX_A7E2F4"/>
<dbReference type="OpenTargets" id="ENSG00000175265"/>
<dbReference type="VEuPathDB" id="HostDB:ENSG00000175265"/>
<dbReference type="eggNOG" id="KOG4725">
    <property type="taxonomic scope" value="Eukaryota"/>
</dbReference>
<dbReference type="GeneTree" id="ENSGT00530000062932"/>
<dbReference type="HOGENOM" id="CLU_012403_1_2_1"/>
<dbReference type="InParanoid" id="A7E2F4"/>
<dbReference type="OMA" id="ELTMECE"/>
<dbReference type="PAN-GO" id="A7E2F4">
    <property type="GO annotations" value="4 GO annotations based on evolutionary models"/>
</dbReference>
<dbReference type="PhylomeDB" id="A7E2F4"/>
<dbReference type="TreeFam" id="TF316990"/>
<dbReference type="PathwayCommons" id="A7E2F4"/>
<dbReference type="SignaLink" id="A7E2F4"/>
<dbReference type="BioGRID-ORCS" id="23015">
    <property type="hits" value="12 hits in 327 CRISPR screens"/>
</dbReference>
<dbReference type="ChiTaRS" id="GOLGA8A">
    <property type="organism name" value="human"/>
</dbReference>
<dbReference type="GenomeRNAi" id="23015"/>
<dbReference type="Pharos" id="A7E2F4">
    <property type="development level" value="Tdark"/>
</dbReference>
<dbReference type="PRO" id="PR:A7E2F4"/>
<dbReference type="Proteomes" id="UP000005640">
    <property type="component" value="Chromosome 15"/>
</dbReference>
<dbReference type="RNAct" id="A7E2F4">
    <property type="molecule type" value="protein"/>
</dbReference>
<dbReference type="Bgee" id="ENSG00000175265">
    <property type="expression patterns" value="Expressed in sural nerve and 200 other cell types or tissues"/>
</dbReference>
<dbReference type="GO" id="GO:0005801">
    <property type="term" value="C:cis-Golgi network"/>
    <property type="evidence" value="ECO:0000318"/>
    <property type="project" value="GO_Central"/>
</dbReference>
<dbReference type="GO" id="GO:0005829">
    <property type="term" value="C:cytosol"/>
    <property type="evidence" value="ECO:0000314"/>
    <property type="project" value="HPA"/>
</dbReference>
<dbReference type="GO" id="GO:0005794">
    <property type="term" value="C:Golgi apparatus"/>
    <property type="evidence" value="ECO:0000314"/>
    <property type="project" value="HPA"/>
</dbReference>
<dbReference type="GO" id="GO:0000137">
    <property type="term" value="C:Golgi cis cisterna"/>
    <property type="evidence" value="ECO:0000318"/>
    <property type="project" value="GO_Central"/>
</dbReference>
<dbReference type="GO" id="GO:0032580">
    <property type="term" value="C:Golgi cisterna membrane"/>
    <property type="evidence" value="ECO:0000318"/>
    <property type="project" value="GO_Central"/>
</dbReference>
<dbReference type="GO" id="GO:0007030">
    <property type="term" value="P:Golgi organization"/>
    <property type="evidence" value="ECO:0000318"/>
    <property type="project" value="GO_Central"/>
</dbReference>
<dbReference type="InterPro" id="IPR043937">
    <property type="entry name" value="GM130_C"/>
</dbReference>
<dbReference type="InterPro" id="IPR043976">
    <property type="entry name" value="GOLGA_cons_dom"/>
</dbReference>
<dbReference type="InterPro" id="IPR024858">
    <property type="entry name" value="Golgin_A"/>
</dbReference>
<dbReference type="PANTHER" id="PTHR10881:SF63">
    <property type="entry name" value="GOLGIN SUBFAMILY A MEMBER 8B"/>
    <property type="match status" value="1"/>
</dbReference>
<dbReference type="PANTHER" id="PTHR10881">
    <property type="entry name" value="GOLGIN SUBFAMILY A MEMBER-RELATED"/>
    <property type="match status" value="1"/>
</dbReference>
<dbReference type="Pfam" id="PF19046">
    <property type="entry name" value="GM130_C"/>
    <property type="match status" value="1"/>
</dbReference>
<dbReference type="Pfam" id="PF15070">
    <property type="entry name" value="GOLGA2L5"/>
    <property type="match status" value="1"/>
</dbReference>
<evidence type="ECO:0000250" key="1"/>
<evidence type="ECO:0000255" key="2"/>
<evidence type="ECO:0000256" key="3">
    <source>
        <dbReference type="SAM" id="MobiDB-lite"/>
    </source>
</evidence>
<evidence type="ECO:0000269" key="4">
    <source>
    </source>
</evidence>
<evidence type="ECO:0000269" key="5">
    <source>
    </source>
</evidence>
<evidence type="ECO:0000269" key="6">
    <source>
    </source>
</evidence>
<evidence type="ECO:0000269" key="7">
    <source ref="1"/>
</evidence>
<evidence type="ECO:0000303" key="8">
    <source>
    </source>
</evidence>
<evidence type="ECO:0000305" key="9"/>
<proteinExistence type="evidence at transcript level"/>
<feature type="chain" id="PRO_0000190070" description="Golgin subfamily A member 8A">
    <location>
        <begin position="1"/>
        <end position="631"/>
    </location>
</feature>
<feature type="region of interest" description="Disordered" evidence="3">
    <location>
        <begin position="1"/>
        <end position="103"/>
    </location>
</feature>
<feature type="region of interest" description="Disordered" evidence="3">
    <location>
        <begin position="127"/>
        <end position="154"/>
    </location>
</feature>
<feature type="region of interest" description="Disordered" evidence="3">
    <location>
        <begin position="426"/>
        <end position="447"/>
    </location>
</feature>
<feature type="region of interest" description="Disordered" evidence="3">
    <location>
        <begin position="488"/>
        <end position="520"/>
    </location>
</feature>
<feature type="region of interest" description="Golgi-targeting domain" evidence="1">
    <location>
        <begin position="519"/>
        <end position="631"/>
    </location>
</feature>
<feature type="coiled-coil region" evidence="2">
    <location>
        <begin position="110"/>
        <end position="468"/>
    </location>
</feature>
<feature type="compositionally biased region" description="Basic and acidic residues" evidence="3">
    <location>
        <begin position="1"/>
        <end position="20"/>
    </location>
</feature>
<feature type="compositionally biased region" description="Low complexity" evidence="3">
    <location>
        <begin position="78"/>
        <end position="92"/>
    </location>
</feature>
<feature type="compositionally biased region" description="Polar residues" evidence="3">
    <location>
        <begin position="93"/>
        <end position="103"/>
    </location>
</feature>
<feature type="compositionally biased region" description="Basic and acidic residues" evidence="3">
    <location>
        <begin position="128"/>
        <end position="152"/>
    </location>
</feature>
<feature type="compositionally biased region" description="Gly residues" evidence="3">
    <location>
        <begin position="497"/>
        <end position="510"/>
    </location>
</feature>
<feature type="splice variant" id="VSP_040753" description="In isoform 2." evidence="8">
    <original>MLPVDGEERKSEGSDTEGDRTSPCAVSSATLKDLEVGGSGRRCSDPAGQPSNLLPQRGLGAPLPAETAHTQPSPNDRSLYLSPK</original>
    <variation>MAEETGQSKLAAAKKKFKEYWQRNRPGVPAAAKRNTKANGSSPETAASGGCHSSEA</variation>
    <location>
        <begin position="1"/>
        <end position="84"/>
    </location>
</feature>
<feature type="sequence variant" id="VAR_064650" description="In dbSNP:rs347880." evidence="4 5 6 7">
    <original>K</original>
    <variation>N</variation>
    <location>
        <position position="480"/>
    </location>
</feature>
<feature type="sequence variant" id="VAR_064651" description="In dbSNP:rs238639." evidence="4 5 6 7">
    <original>S</original>
    <variation>N</variation>
    <location>
        <position position="530"/>
    </location>
</feature>
<feature type="sequence variant" id="VAR_064652" description="In dbSNP:rs347879." evidence="4 5 6 7">
    <original>R</original>
    <variation>Q</variation>
    <location>
        <position position="541"/>
    </location>
</feature>
<feature type="sequence conflict" description="In Ref. 4; AAH93673." evidence="9" ref="4">
    <original>R</original>
    <variation>P</variation>
    <location>
        <position position="95"/>
    </location>
</feature>
<feature type="sequence conflict" description="In Ref. 4; AAH93673." evidence="9" ref="4">
    <original>R</original>
    <variation>Q</variation>
    <location>
        <position position="380"/>
    </location>
</feature>
<feature type="sequence conflict" description="In Ref. 4; AAH93673." evidence="9" ref="4">
    <original>M</original>
    <variation>T</variation>
    <location>
        <position position="422"/>
    </location>
</feature>
<feature type="sequence conflict" description="In Ref. 1; AAF28463, 2; BAA74878, 4; AAI44610/AAI50330/AAI52411 and 5; CAH18214." evidence="9" ref="1 2 4 5">
    <original>V</original>
    <variation>I</variation>
    <location>
        <position position="596"/>
    </location>
</feature>
<organism>
    <name type="scientific">Homo sapiens</name>
    <name type="common">Human</name>
    <dbReference type="NCBI Taxonomy" id="9606"/>
    <lineage>
        <taxon>Eukaryota</taxon>
        <taxon>Metazoa</taxon>
        <taxon>Chordata</taxon>
        <taxon>Craniata</taxon>
        <taxon>Vertebrata</taxon>
        <taxon>Euteleostomi</taxon>
        <taxon>Mammalia</taxon>
        <taxon>Eutheria</taxon>
        <taxon>Euarchontoglires</taxon>
        <taxon>Primates</taxon>
        <taxon>Haplorrhini</taxon>
        <taxon>Catarrhini</taxon>
        <taxon>Hominidae</taxon>
        <taxon>Homo</taxon>
    </lineage>
</organism>
<name>GOG8A_HUMAN</name>
<protein>
    <recommendedName>
        <fullName>Golgin subfamily A member 8A</fullName>
    </recommendedName>
    <alternativeName>
        <fullName>88 kDa Golgi matrix protein</fullName>
        <shortName>GM88</shortName>
    </alternativeName>
    <alternativeName>
        <fullName>GM88 autoantigen</fullName>
    </alternativeName>
</protein>
<gene>
    <name type="primary">GOLGA8A</name>
    <name type="synonym">KIAA0855</name>
</gene>
<sequence length="631" mass="70117">MLPVDGEERKSEGSDTEGDRTSPCAVSSATLKDLEVGGSGRRCSDPAGQPSNLLPQRGLGAPLPAETAHTQPSPNDRSLYLSPKSSSASSSLHARQSPCQEQAAVLNSRSIKISRLNDTIKSLKQQKKQVEHQLEEEKKANNEKQKAERELEGQIQRLNTEKKKLNTDLYHMKHSLRYFEEESKDLAGRLQRSSQRIGELEWSLCAVAATQKKKPDGFSSRSKALLKRQLEQSIREQILLKGHVTQLKESLKEVQLERDQYAEQIKGERAQWQQRMRKMSQEVCTLKEEKKHDTHRVEELERSLSRLKNQMAEPLPPDAPAVSSEVELQDLRKELERVAGELQAQVENNQCISLLNRGQKERLREQEERLQEQQERLREREKRLQQLAEPQSDLEELKHENKSALQLEQQVKELQEKLGQVMETLTSAEKEPEAAVPASGTGGESSGLMDLLEEKADLREHVEKLELGFIQYRRERCHQKVHRLLTEPGDSAKDASPGGGHHQAGPGQGGEEGEAAGAAGDGVAACGSYSEGHGKFLAAARNPAAEPSPGAPAPQELGAADKHGDLCEASLTNSVEPAQGEAREGSSQDNPTAQPVVQLLGEMQDHQEHPGLGSNCCVPCFCWAWLPRRRR</sequence>
<accession>A7E2F4</accession>
<accession>A7MCY9</accession>
<accession>B7ZMK5</accession>
<accession>O94937</accession>
<accession>Q52M46</accession>
<accession>Q68DK6</accession>
<accession>Q9NZG8</accession>
<accession>Q9NZW0</accession>
<accession>Q9NZW3</accession>
<keyword id="KW-0025">Alternative splicing</keyword>
<keyword id="KW-0175">Coiled coil</keyword>
<keyword id="KW-0333">Golgi apparatus</keyword>
<keyword id="KW-0472">Membrane</keyword>
<keyword id="KW-1185">Reference proteome</keyword>